<dbReference type="EMBL" id="DS469517">
    <property type="protein sequence ID" value="EDO47811.1"/>
    <property type="molecule type" value="Genomic_DNA"/>
</dbReference>
<dbReference type="SMR" id="A7RL75"/>
<dbReference type="STRING" id="45351.A7RL75"/>
<dbReference type="EnsemblMetazoa" id="EDO47811">
    <property type="protein sequence ID" value="EDO47811"/>
    <property type="gene ID" value="NEMVEDRAFT_v1g239069"/>
</dbReference>
<dbReference type="GeneID" id="5520087"/>
<dbReference type="KEGG" id="nve:5520087"/>
<dbReference type="eggNOG" id="KOG4555">
    <property type="taxonomic scope" value="Eukaryota"/>
</dbReference>
<dbReference type="HOGENOM" id="CLU_1464567_0_0_1"/>
<dbReference type="InParanoid" id="A7RL75"/>
<dbReference type="OMA" id="CNQMLCE"/>
<dbReference type="OrthoDB" id="539634at2759"/>
<dbReference type="PhylomeDB" id="A7RL75"/>
<dbReference type="Proteomes" id="UP000001593">
    <property type="component" value="Unassembled WGS sequence"/>
</dbReference>
<dbReference type="GO" id="GO:0006570">
    <property type="term" value="P:tyrosine metabolic process"/>
    <property type="evidence" value="ECO:0000318"/>
    <property type="project" value="GO_Central"/>
</dbReference>
<dbReference type="FunFam" id="1.25.40.10:FF:000213">
    <property type="entry name" value="Tetratricopeptide repeat domain 36"/>
    <property type="match status" value="1"/>
</dbReference>
<dbReference type="Gene3D" id="1.25.40.10">
    <property type="entry name" value="Tetratricopeptide repeat domain"/>
    <property type="match status" value="1"/>
</dbReference>
<dbReference type="InterPro" id="IPR011990">
    <property type="entry name" value="TPR-like_helical_dom_sf"/>
</dbReference>
<dbReference type="InterPro" id="IPR019734">
    <property type="entry name" value="TPR_rpt"/>
</dbReference>
<dbReference type="InterPro" id="IPR038906">
    <property type="entry name" value="TTC36"/>
</dbReference>
<dbReference type="PANTHER" id="PTHR21405">
    <property type="entry name" value="CDNA SEQUENCE BC021608"/>
    <property type="match status" value="1"/>
</dbReference>
<dbReference type="PANTHER" id="PTHR21405:SF0">
    <property type="entry name" value="TETRATRICOPEPTIDE REPEAT PROTEIN 36"/>
    <property type="match status" value="1"/>
</dbReference>
<dbReference type="Pfam" id="PF13181">
    <property type="entry name" value="TPR_8"/>
    <property type="match status" value="1"/>
</dbReference>
<dbReference type="SMART" id="SM00028">
    <property type="entry name" value="TPR"/>
    <property type="match status" value="3"/>
</dbReference>
<dbReference type="SUPFAM" id="SSF48452">
    <property type="entry name" value="TPR-like"/>
    <property type="match status" value="1"/>
</dbReference>
<dbReference type="PROSITE" id="PS50005">
    <property type="entry name" value="TPR"/>
    <property type="match status" value="3"/>
</dbReference>
<dbReference type="PROSITE" id="PS50293">
    <property type="entry name" value="TPR_REGION"/>
    <property type="match status" value="1"/>
</dbReference>
<keyword id="KW-1185">Reference proteome</keyword>
<keyword id="KW-0677">Repeat</keyword>
<keyword id="KW-0802">TPR repeat</keyword>
<feature type="chain" id="PRO_0000332184" description="Tetratricopeptide repeat protein 36 homolog">
    <location>
        <begin position="1"/>
        <end position="181"/>
    </location>
</feature>
<feature type="repeat" description="TPR 1">
    <location>
        <begin position="46"/>
        <end position="79"/>
    </location>
</feature>
<feature type="repeat" description="TPR 2">
    <location>
        <begin position="81"/>
        <end position="113"/>
    </location>
</feature>
<feature type="repeat" description="TPR 3">
    <location>
        <begin position="118"/>
        <end position="151"/>
    </location>
</feature>
<sequence length="181" mass="19538">MAASVKDRAVLDAIFNPLLPLGDCPQEIIEEELPIENTNEDDVKRAKEYEIQGVEKAEAGDFVGALDCFNKAIDVAPLRASGYNNRAQLSRLRGDNQSAMEDLNKAIELSHEHGAAAAQAYTQRGLLHRLEGNDEAASEDFQHGATLGNAFAKAMTVQLNPYAAMCNKMLAEAIGKLSGHA</sequence>
<proteinExistence type="inferred from homology"/>
<comment type="similarity">
    <text evidence="1">Belongs to the TTC36 family.</text>
</comment>
<name>TTC36_NEMVE</name>
<evidence type="ECO:0000305" key="1"/>
<protein>
    <recommendedName>
        <fullName>Tetratricopeptide repeat protein 36 homolog</fullName>
        <shortName>TPR repeat protein 36 homolog</shortName>
    </recommendedName>
</protein>
<organism>
    <name type="scientific">Nematostella vectensis</name>
    <name type="common">Starlet sea anemone</name>
    <dbReference type="NCBI Taxonomy" id="45351"/>
    <lineage>
        <taxon>Eukaryota</taxon>
        <taxon>Metazoa</taxon>
        <taxon>Cnidaria</taxon>
        <taxon>Anthozoa</taxon>
        <taxon>Hexacorallia</taxon>
        <taxon>Actiniaria</taxon>
        <taxon>Edwardsiidae</taxon>
        <taxon>Nematostella</taxon>
    </lineage>
</organism>
<reference key="1">
    <citation type="journal article" date="2007" name="Science">
        <title>Sea anemone genome reveals ancestral eumetazoan gene repertoire and genomic organization.</title>
        <authorList>
            <person name="Putnam N.H."/>
            <person name="Srivastava M."/>
            <person name="Hellsten U."/>
            <person name="Dirks B."/>
            <person name="Chapman J."/>
            <person name="Salamov A."/>
            <person name="Terry A."/>
            <person name="Shapiro H."/>
            <person name="Lindquist E."/>
            <person name="Kapitonov V.V."/>
            <person name="Jurka J."/>
            <person name="Genikhovich G."/>
            <person name="Grigoriev I.V."/>
            <person name="Lucas S.M."/>
            <person name="Steele R.E."/>
            <person name="Finnerty J.R."/>
            <person name="Technau U."/>
            <person name="Martindale M.Q."/>
            <person name="Rokhsar D.S."/>
        </authorList>
    </citation>
    <scope>NUCLEOTIDE SEQUENCE [LARGE SCALE GENOMIC DNA]</scope>
    <source>
        <strain>CH2 X CH6</strain>
    </source>
</reference>
<accession>A7RL75</accession>
<gene>
    <name type="primary">ttc36</name>
    <name type="ORF">v1g239069</name>
</gene>